<reference key="1">
    <citation type="journal article" date="2005" name="J. Bacteriol.">
        <title>Completion of the genome sequence of Brucella abortus and comparison to the highly similar genomes of Brucella melitensis and Brucella suis.</title>
        <authorList>
            <person name="Halling S.M."/>
            <person name="Peterson-Burch B.D."/>
            <person name="Bricker B.J."/>
            <person name="Zuerner R.L."/>
            <person name="Qing Z."/>
            <person name="Li L.-L."/>
            <person name="Kapur V."/>
            <person name="Alt D.P."/>
            <person name="Olsen S.C."/>
        </authorList>
    </citation>
    <scope>NUCLEOTIDE SEQUENCE [LARGE SCALE GENOMIC DNA]</scope>
    <source>
        <strain>9-941</strain>
    </source>
</reference>
<gene>
    <name evidence="1" type="primary">rplT</name>
    <name type="ordered locus">BruAb1_2095</name>
</gene>
<comment type="function">
    <text evidence="1">Binds directly to 23S ribosomal RNA and is necessary for the in vitro assembly process of the 50S ribosomal subunit. It is not involved in the protein synthesizing functions of that subunit.</text>
</comment>
<comment type="similarity">
    <text evidence="1">Belongs to the bacterial ribosomal protein bL20 family.</text>
</comment>
<feature type="chain" id="PRO_0000243661" description="Large ribosomal subunit protein bL20">
    <location>
        <begin position="1"/>
        <end position="134"/>
    </location>
</feature>
<evidence type="ECO:0000255" key="1">
    <source>
        <dbReference type="HAMAP-Rule" id="MF_00382"/>
    </source>
</evidence>
<evidence type="ECO:0000305" key="2"/>
<proteinExistence type="inferred from homology"/>
<keyword id="KW-0687">Ribonucleoprotein</keyword>
<keyword id="KW-0689">Ribosomal protein</keyword>
<keyword id="KW-0694">RNA-binding</keyword>
<keyword id="KW-0699">rRNA-binding</keyword>
<name>RL20_BRUAB</name>
<dbReference type="EMBL" id="AE017223">
    <property type="protein sequence ID" value="AAX75392.1"/>
    <property type="molecule type" value="Genomic_DNA"/>
</dbReference>
<dbReference type="RefSeq" id="WP_002965185.1">
    <property type="nucleotide sequence ID" value="NC_006932.1"/>
</dbReference>
<dbReference type="SMR" id="Q57AE2"/>
<dbReference type="EnsemblBacteria" id="AAX75392">
    <property type="protein sequence ID" value="AAX75392"/>
    <property type="gene ID" value="BruAb1_2095"/>
</dbReference>
<dbReference type="GeneID" id="97534622"/>
<dbReference type="KEGG" id="bmb:BruAb1_2095"/>
<dbReference type="HOGENOM" id="CLU_123265_0_1_5"/>
<dbReference type="Proteomes" id="UP000000540">
    <property type="component" value="Chromosome I"/>
</dbReference>
<dbReference type="GO" id="GO:1990904">
    <property type="term" value="C:ribonucleoprotein complex"/>
    <property type="evidence" value="ECO:0007669"/>
    <property type="project" value="UniProtKB-KW"/>
</dbReference>
<dbReference type="GO" id="GO:0005840">
    <property type="term" value="C:ribosome"/>
    <property type="evidence" value="ECO:0007669"/>
    <property type="project" value="UniProtKB-KW"/>
</dbReference>
<dbReference type="GO" id="GO:0019843">
    <property type="term" value="F:rRNA binding"/>
    <property type="evidence" value="ECO:0007669"/>
    <property type="project" value="UniProtKB-UniRule"/>
</dbReference>
<dbReference type="GO" id="GO:0003735">
    <property type="term" value="F:structural constituent of ribosome"/>
    <property type="evidence" value="ECO:0007669"/>
    <property type="project" value="InterPro"/>
</dbReference>
<dbReference type="GO" id="GO:0000027">
    <property type="term" value="P:ribosomal large subunit assembly"/>
    <property type="evidence" value="ECO:0007669"/>
    <property type="project" value="UniProtKB-UniRule"/>
</dbReference>
<dbReference type="GO" id="GO:0006412">
    <property type="term" value="P:translation"/>
    <property type="evidence" value="ECO:0007669"/>
    <property type="project" value="InterPro"/>
</dbReference>
<dbReference type="CDD" id="cd07026">
    <property type="entry name" value="Ribosomal_L20"/>
    <property type="match status" value="1"/>
</dbReference>
<dbReference type="FunFam" id="1.10.1900.20:FF:000001">
    <property type="entry name" value="50S ribosomal protein L20"/>
    <property type="match status" value="1"/>
</dbReference>
<dbReference type="Gene3D" id="6.10.160.10">
    <property type="match status" value="1"/>
</dbReference>
<dbReference type="Gene3D" id="1.10.1900.20">
    <property type="entry name" value="Ribosomal protein L20"/>
    <property type="match status" value="1"/>
</dbReference>
<dbReference type="HAMAP" id="MF_00382">
    <property type="entry name" value="Ribosomal_bL20"/>
    <property type="match status" value="1"/>
</dbReference>
<dbReference type="InterPro" id="IPR005813">
    <property type="entry name" value="Ribosomal_bL20"/>
</dbReference>
<dbReference type="InterPro" id="IPR049946">
    <property type="entry name" value="RIBOSOMAL_L20_CS"/>
</dbReference>
<dbReference type="InterPro" id="IPR035566">
    <property type="entry name" value="Ribosomal_protein_bL20_C"/>
</dbReference>
<dbReference type="NCBIfam" id="TIGR01032">
    <property type="entry name" value="rplT_bact"/>
    <property type="match status" value="1"/>
</dbReference>
<dbReference type="PANTHER" id="PTHR10986">
    <property type="entry name" value="39S RIBOSOMAL PROTEIN L20"/>
    <property type="match status" value="1"/>
</dbReference>
<dbReference type="Pfam" id="PF00453">
    <property type="entry name" value="Ribosomal_L20"/>
    <property type="match status" value="1"/>
</dbReference>
<dbReference type="PRINTS" id="PR00062">
    <property type="entry name" value="RIBOSOMALL20"/>
</dbReference>
<dbReference type="SUPFAM" id="SSF74731">
    <property type="entry name" value="Ribosomal protein L20"/>
    <property type="match status" value="1"/>
</dbReference>
<dbReference type="PROSITE" id="PS00937">
    <property type="entry name" value="RIBOSOMAL_L20"/>
    <property type="match status" value="1"/>
</dbReference>
<organism>
    <name type="scientific">Brucella abortus biovar 1 (strain 9-941)</name>
    <dbReference type="NCBI Taxonomy" id="262698"/>
    <lineage>
        <taxon>Bacteria</taxon>
        <taxon>Pseudomonadati</taxon>
        <taxon>Pseudomonadota</taxon>
        <taxon>Alphaproteobacteria</taxon>
        <taxon>Hyphomicrobiales</taxon>
        <taxon>Brucellaceae</taxon>
        <taxon>Brucella/Ochrobactrum group</taxon>
        <taxon>Brucella</taxon>
    </lineage>
</organism>
<sequence length="134" mass="15095">MARVKRGVTAHAKHKKVLDQAAGFRGRRKNTIRTAKAAVDRSKQYAYRDRKNRKRSFRALWIQRINAAVREQGLTYGRFIDGLAKAGIEIDRKVLSDIAIHEPEAFAALVASAKKALEYLKNTSMPNAFEGAVR</sequence>
<accession>Q57AE2</accession>
<protein>
    <recommendedName>
        <fullName evidence="1">Large ribosomal subunit protein bL20</fullName>
    </recommendedName>
    <alternativeName>
        <fullName evidence="2">50S ribosomal protein L20</fullName>
    </alternativeName>
</protein>